<comment type="function">
    <text evidence="1">Has a role in meiosis.</text>
</comment>
<comment type="subcellular location">
    <subcellularLocation>
        <location evidence="2">Cytoplasm</location>
    </subcellularLocation>
    <subcellularLocation>
        <location evidence="2">Nucleus</location>
    </subcellularLocation>
    <text>Localizes at the cell tip and the barrier septum.</text>
</comment>
<comment type="similarity">
    <text evidence="3">Belongs to the arrestin family.</text>
</comment>
<name>MU170_SCHPO</name>
<protein>
    <recommendedName>
        <fullName>Meiotically up-regulated gene 170 protein</fullName>
    </recommendedName>
</protein>
<proteinExistence type="evidence at protein level"/>
<reference key="1">
    <citation type="journal article" date="2002" name="Nature">
        <title>The genome sequence of Schizosaccharomyces pombe.</title>
        <authorList>
            <person name="Wood V."/>
            <person name="Gwilliam R."/>
            <person name="Rajandream M.A."/>
            <person name="Lyne M.H."/>
            <person name="Lyne R."/>
            <person name="Stewart A."/>
            <person name="Sgouros J.G."/>
            <person name="Peat N."/>
            <person name="Hayles J."/>
            <person name="Baker S.G."/>
            <person name="Basham D."/>
            <person name="Bowman S."/>
            <person name="Brooks K."/>
            <person name="Brown D."/>
            <person name="Brown S."/>
            <person name="Chillingworth T."/>
            <person name="Churcher C.M."/>
            <person name="Collins M."/>
            <person name="Connor R."/>
            <person name="Cronin A."/>
            <person name="Davis P."/>
            <person name="Feltwell T."/>
            <person name="Fraser A."/>
            <person name="Gentles S."/>
            <person name="Goble A."/>
            <person name="Hamlin N."/>
            <person name="Harris D.E."/>
            <person name="Hidalgo J."/>
            <person name="Hodgson G."/>
            <person name="Holroyd S."/>
            <person name="Hornsby T."/>
            <person name="Howarth S."/>
            <person name="Huckle E.J."/>
            <person name="Hunt S."/>
            <person name="Jagels K."/>
            <person name="James K.D."/>
            <person name="Jones L."/>
            <person name="Jones M."/>
            <person name="Leather S."/>
            <person name="McDonald S."/>
            <person name="McLean J."/>
            <person name="Mooney P."/>
            <person name="Moule S."/>
            <person name="Mungall K.L."/>
            <person name="Murphy L.D."/>
            <person name="Niblett D."/>
            <person name="Odell C."/>
            <person name="Oliver K."/>
            <person name="O'Neil S."/>
            <person name="Pearson D."/>
            <person name="Quail M.A."/>
            <person name="Rabbinowitsch E."/>
            <person name="Rutherford K.M."/>
            <person name="Rutter S."/>
            <person name="Saunders D."/>
            <person name="Seeger K."/>
            <person name="Sharp S."/>
            <person name="Skelton J."/>
            <person name="Simmonds M.N."/>
            <person name="Squares R."/>
            <person name="Squares S."/>
            <person name="Stevens K."/>
            <person name="Taylor K."/>
            <person name="Taylor R.G."/>
            <person name="Tivey A."/>
            <person name="Walsh S.V."/>
            <person name="Warren T."/>
            <person name="Whitehead S."/>
            <person name="Woodward J.R."/>
            <person name="Volckaert G."/>
            <person name="Aert R."/>
            <person name="Robben J."/>
            <person name="Grymonprez B."/>
            <person name="Weltjens I."/>
            <person name="Vanstreels E."/>
            <person name="Rieger M."/>
            <person name="Schaefer M."/>
            <person name="Mueller-Auer S."/>
            <person name="Gabel C."/>
            <person name="Fuchs M."/>
            <person name="Duesterhoeft A."/>
            <person name="Fritzc C."/>
            <person name="Holzer E."/>
            <person name="Moestl D."/>
            <person name="Hilbert H."/>
            <person name="Borzym K."/>
            <person name="Langer I."/>
            <person name="Beck A."/>
            <person name="Lehrach H."/>
            <person name="Reinhardt R."/>
            <person name="Pohl T.M."/>
            <person name="Eger P."/>
            <person name="Zimmermann W."/>
            <person name="Wedler H."/>
            <person name="Wambutt R."/>
            <person name="Purnelle B."/>
            <person name="Goffeau A."/>
            <person name="Cadieu E."/>
            <person name="Dreano S."/>
            <person name="Gloux S."/>
            <person name="Lelaure V."/>
            <person name="Mottier S."/>
            <person name="Galibert F."/>
            <person name="Aves S.J."/>
            <person name="Xiang Z."/>
            <person name="Hunt C."/>
            <person name="Moore K."/>
            <person name="Hurst S.M."/>
            <person name="Lucas M."/>
            <person name="Rochet M."/>
            <person name="Gaillardin C."/>
            <person name="Tallada V.A."/>
            <person name="Garzon A."/>
            <person name="Thode G."/>
            <person name="Daga R.R."/>
            <person name="Cruzado L."/>
            <person name="Jimenez J."/>
            <person name="Sanchez M."/>
            <person name="del Rey F."/>
            <person name="Benito J."/>
            <person name="Dominguez A."/>
            <person name="Revuelta J.L."/>
            <person name="Moreno S."/>
            <person name="Armstrong J."/>
            <person name="Forsburg S.L."/>
            <person name="Cerutti L."/>
            <person name="Lowe T."/>
            <person name="McCombie W.R."/>
            <person name="Paulsen I."/>
            <person name="Potashkin J."/>
            <person name="Shpakovski G.V."/>
            <person name="Ussery D."/>
            <person name="Barrell B.G."/>
            <person name="Nurse P."/>
        </authorList>
    </citation>
    <scope>NUCLEOTIDE SEQUENCE [LARGE SCALE GENOMIC DNA]</scope>
    <source>
        <strain>972 / ATCC 24843</strain>
    </source>
</reference>
<reference key="2">
    <citation type="journal article" date="2005" name="Curr. Biol.">
        <title>A large-scale screen in S. pombe identifies seven novel genes required for critical meiotic events.</title>
        <authorList>
            <person name="Martin-Castellanos C."/>
            <person name="Blanco M."/>
            <person name="Rozalen A.E."/>
            <person name="Perez-Hidalgo L."/>
            <person name="Garcia A.I."/>
            <person name="Conde F."/>
            <person name="Mata J."/>
            <person name="Ellermeier C."/>
            <person name="Davis L."/>
            <person name="San-Segundo P."/>
            <person name="Smith G.R."/>
            <person name="Moreno S."/>
        </authorList>
    </citation>
    <scope>FUNCTION IN MEIOSIS</scope>
</reference>
<reference key="3">
    <citation type="journal article" date="2006" name="Nat. Biotechnol.">
        <title>ORFeome cloning and global analysis of protein localization in the fission yeast Schizosaccharomyces pombe.</title>
        <authorList>
            <person name="Matsuyama A."/>
            <person name="Arai R."/>
            <person name="Yashiroda Y."/>
            <person name="Shirai A."/>
            <person name="Kamata A."/>
            <person name="Sekido S."/>
            <person name="Kobayashi Y."/>
            <person name="Hashimoto A."/>
            <person name="Hamamoto M."/>
            <person name="Hiraoka Y."/>
            <person name="Horinouchi S."/>
            <person name="Yoshida M."/>
        </authorList>
    </citation>
    <scope>SUBCELLULAR LOCATION [LARGE SCALE ANALYSIS]</scope>
</reference>
<sequence length="426" mass="48381">MTEELFSNSETCSLSDPLTSKTLSSIENPFDDPYILSEESEILTIKTDVLRPNILNRKSSFYPEADAPVRKSNLQVKKIFENQVLNCDGIKVAITIPDTSLIAGSLLHGNIWLSYEGAKNVETGVWIKEMFLDFYGILNFKGHSEPFYSISEKYSFCNLKTSALILSKAASASIGNKGLFLKCSCKVGFPFSFIVPLDIGPGTYHSSKLELLYYISSTLTLTSLDQNIRCTRCTIPKRVITSMHNNIAELYNPISCIKSLPYLSLEEAKTTLEVHTDRSLFFSGQIIDFTICYTHNHHRRIHNIKARLLETHIFHPNTQNHYGGYCMNQAEETFASCGYLKRYQKTKTKTRAKSTWKIANKSVYSNLAPTLKNTIHAQIKIPEFCRSVNLKDQLKIDYTLEVCFSAFFKPRILSIQIPITILHSWN</sequence>
<dbReference type="EMBL" id="CU329672">
    <property type="protein sequence ID" value="CAB54862.1"/>
    <property type="molecule type" value="Genomic_DNA"/>
</dbReference>
<dbReference type="PIR" id="T41682">
    <property type="entry name" value="T41682"/>
</dbReference>
<dbReference type="RefSeq" id="NP_588556.1">
    <property type="nucleotide sequence ID" value="NM_001023543.2"/>
</dbReference>
<dbReference type="BioGRID" id="276158">
    <property type="interactions" value="19"/>
</dbReference>
<dbReference type="FunCoup" id="Q9UU84">
    <property type="interactions" value="13"/>
</dbReference>
<dbReference type="STRING" id="284812.Q9UU84"/>
<dbReference type="PaxDb" id="4896-SPCP1E11.03.1"/>
<dbReference type="EnsemblFungi" id="SPCP1E11.03.1">
    <property type="protein sequence ID" value="SPCP1E11.03.1:pep"/>
    <property type="gene ID" value="SPCP1E11.03"/>
</dbReference>
<dbReference type="GeneID" id="2539600"/>
<dbReference type="KEGG" id="spo:2539600"/>
<dbReference type="PomBase" id="SPCP1E11.03">
    <property type="gene designation" value="mug170"/>
</dbReference>
<dbReference type="VEuPathDB" id="FungiDB:SPCP1E11.03"/>
<dbReference type="HOGENOM" id="CLU_667573_0_0_1"/>
<dbReference type="InParanoid" id="Q9UU84"/>
<dbReference type="OMA" id="EPCKFSF"/>
<dbReference type="Reactome" id="R-SPO-844456">
    <property type="pathway name" value="The NLRP3 inflammasome"/>
</dbReference>
<dbReference type="PRO" id="PR:Q9UU84"/>
<dbReference type="Proteomes" id="UP000002485">
    <property type="component" value="Chromosome III"/>
</dbReference>
<dbReference type="GO" id="GO:0032153">
    <property type="term" value="C:cell division site"/>
    <property type="evidence" value="ECO:0007005"/>
    <property type="project" value="PomBase"/>
</dbReference>
<dbReference type="GO" id="GO:0051286">
    <property type="term" value="C:cell tip"/>
    <property type="evidence" value="ECO:0007005"/>
    <property type="project" value="PomBase"/>
</dbReference>
<dbReference type="GO" id="GO:0005737">
    <property type="term" value="C:cytoplasm"/>
    <property type="evidence" value="ECO:0000314"/>
    <property type="project" value="PomBase"/>
</dbReference>
<dbReference type="GO" id="GO:0005829">
    <property type="term" value="C:cytosol"/>
    <property type="evidence" value="ECO:0000318"/>
    <property type="project" value="GO_Central"/>
</dbReference>
<dbReference type="GO" id="GO:0005634">
    <property type="term" value="C:nucleus"/>
    <property type="evidence" value="ECO:0007005"/>
    <property type="project" value="PomBase"/>
</dbReference>
<dbReference type="GO" id="GO:0005886">
    <property type="term" value="C:plasma membrane"/>
    <property type="evidence" value="ECO:0000318"/>
    <property type="project" value="GO_Central"/>
</dbReference>
<dbReference type="GO" id="GO:0005509">
    <property type="term" value="F:calcium ion binding"/>
    <property type="evidence" value="ECO:0000255"/>
    <property type="project" value="PomBase"/>
</dbReference>
<dbReference type="GO" id="GO:0030674">
    <property type="term" value="F:protein-macromolecule adaptor activity"/>
    <property type="evidence" value="ECO:0000318"/>
    <property type="project" value="GO_Central"/>
</dbReference>
<dbReference type="GO" id="GO:0031625">
    <property type="term" value="F:ubiquitin protein ligase binding"/>
    <property type="evidence" value="ECO:0000318"/>
    <property type="project" value="GO_Central"/>
</dbReference>
<dbReference type="GO" id="GO:0051321">
    <property type="term" value="P:meiotic cell cycle"/>
    <property type="evidence" value="ECO:0007669"/>
    <property type="project" value="UniProtKB-KW"/>
</dbReference>
<dbReference type="GO" id="GO:0070086">
    <property type="term" value="P:ubiquitin-dependent endocytosis"/>
    <property type="evidence" value="ECO:0000318"/>
    <property type="project" value="GO_Central"/>
</dbReference>
<dbReference type="Gene3D" id="2.60.40.640">
    <property type="match status" value="1"/>
</dbReference>
<dbReference type="InterPro" id="IPR014752">
    <property type="entry name" value="Arrestin-like_C"/>
</dbReference>
<dbReference type="InterPro" id="IPR011022">
    <property type="entry name" value="Arrestin_C-like"/>
</dbReference>
<dbReference type="InterPro" id="IPR050357">
    <property type="entry name" value="Arrestin_domain-protein"/>
</dbReference>
<dbReference type="InterPro" id="IPR014756">
    <property type="entry name" value="Ig_E-set"/>
</dbReference>
<dbReference type="PANTHER" id="PTHR11188">
    <property type="entry name" value="ARRESTIN DOMAIN CONTAINING PROTEIN"/>
    <property type="match status" value="1"/>
</dbReference>
<dbReference type="PANTHER" id="PTHR11188:SF17">
    <property type="entry name" value="FI21816P1"/>
    <property type="match status" value="1"/>
</dbReference>
<dbReference type="Pfam" id="PF02752">
    <property type="entry name" value="Arrestin_C"/>
    <property type="match status" value="1"/>
</dbReference>
<dbReference type="SMART" id="SM01017">
    <property type="entry name" value="Arrestin_C"/>
    <property type="match status" value="1"/>
</dbReference>
<dbReference type="SUPFAM" id="SSF81296">
    <property type="entry name" value="E set domains"/>
    <property type="match status" value="1"/>
</dbReference>
<gene>
    <name type="primary">mug170</name>
    <name type="ORF">SPCP1E11.03</name>
</gene>
<keyword id="KW-0963">Cytoplasm</keyword>
<keyword id="KW-0469">Meiosis</keyword>
<keyword id="KW-0539">Nucleus</keyword>
<keyword id="KW-1185">Reference proteome</keyword>
<feature type="chain" id="PRO_0000278516" description="Meiotically up-regulated gene 170 protein">
    <location>
        <begin position="1"/>
        <end position="426"/>
    </location>
</feature>
<evidence type="ECO:0000269" key="1">
    <source>
    </source>
</evidence>
<evidence type="ECO:0000269" key="2">
    <source>
    </source>
</evidence>
<evidence type="ECO:0000305" key="3"/>
<organism>
    <name type="scientific">Schizosaccharomyces pombe (strain 972 / ATCC 24843)</name>
    <name type="common">Fission yeast</name>
    <dbReference type="NCBI Taxonomy" id="284812"/>
    <lineage>
        <taxon>Eukaryota</taxon>
        <taxon>Fungi</taxon>
        <taxon>Dikarya</taxon>
        <taxon>Ascomycota</taxon>
        <taxon>Taphrinomycotina</taxon>
        <taxon>Schizosaccharomycetes</taxon>
        <taxon>Schizosaccharomycetales</taxon>
        <taxon>Schizosaccharomycetaceae</taxon>
        <taxon>Schizosaccharomyces</taxon>
    </lineage>
</organism>
<accession>Q9UU84</accession>